<name>TUSB_ECO27</name>
<sequence>MLHTLHRSPWLTDFAALLRLLSEGDELLLLQDGVTAAVDGNRYLESLRNAPIKVYALNEDLIARGLTGQISNDIIPIDYTDFVRLTVKHSSQMAW</sequence>
<comment type="function">
    <text evidence="1">Part of a sulfur-relay system required for 2-thiolation of 5-methylaminomethyl-2-thiouridine (mnm(5)s(2)U) at tRNA wobble positions.</text>
</comment>
<comment type="subunit">
    <text evidence="1">Heterohexamer, formed by a dimer of trimers. The hexameric TusBCD complex contains 2 copies each of TusB, TusC and TusD. The TusBCD complex interacts with TusE.</text>
</comment>
<comment type="subcellular location">
    <subcellularLocation>
        <location evidence="1">Cytoplasm</location>
    </subcellularLocation>
</comment>
<comment type="similarity">
    <text evidence="1">Belongs to the DsrH/TusB family.</text>
</comment>
<gene>
    <name evidence="1" type="primary">tusB</name>
    <name type="ordered locus">E2348C_3592</name>
</gene>
<feature type="chain" id="PRO_1000185448" description="Protein TusB">
    <location>
        <begin position="1"/>
        <end position="95"/>
    </location>
</feature>
<reference key="1">
    <citation type="journal article" date="2009" name="J. Bacteriol.">
        <title>Complete genome sequence and comparative genome analysis of enteropathogenic Escherichia coli O127:H6 strain E2348/69.</title>
        <authorList>
            <person name="Iguchi A."/>
            <person name="Thomson N.R."/>
            <person name="Ogura Y."/>
            <person name="Saunders D."/>
            <person name="Ooka T."/>
            <person name="Henderson I.R."/>
            <person name="Harris D."/>
            <person name="Asadulghani M."/>
            <person name="Kurokawa K."/>
            <person name="Dean P."/>
            <person name="Kenny B."/>
            <person name="Quail M.A."/>
            <person name="Thurston S."/>
            <person name="Dougan G."/>
            <person name="Hayashi T."/>
            <person name="Parkhill J."/>
            <person name="Frankel G."/>
        </authorList>
    </citation>
    <scope>NUCLEOTIDE SEQUENCE [LARGE SCALE GENOMIC DNA]</scope>
    <source>
        <strain>E2348/69 / EPEC</strain>
    </source>
</reference>
<organism>
    <name type="scientific">Escherichia coli O127:H6 (strain E2348/69 / EPEC)</name>
    <dbReference type="NCBI Taxonomy" id="574521"/>
    <lineage>
        <taxon>Bacteria</taxon>
        <taxon>Pseudomonadati</taxon>
        <taxon>Pseudomonadota</taxon>
        <taxon>Gammaproteobacteria</taxon>
        <taxon>Enterobacterales</taxon>
        <taxon>Enterobacteriaceae</taxon>
        <taxon>Escherichia</taxon>
    </lineage>
</organism>
<keyword id="KW-0963">Cytoplasm</keyword>
<keyword id="KW-1185">Reference proteome</keyword>
<keyword id="KW-0819">tRNA processing</keyword>
<protein>
    <recommendedName>
        <fullName evidence="1">Protein TusB</fullName>
    </recommendedName>
    <alternativeName>
        <fullName evidence="1">tRNA 2-thiouridine synthesizing protein B</fullName>
    </alternativeName>
</protein>
<accession>B7UK53</accession>
<dbReference type="EMBL" id="FM180568">
    <property type="protein sequence ID" value="CAS11140.1"/>
    <property type="molecule type" value="Genomic_DNA"/>
</dbReference>
<dbReference type="RefSeq" id="WP_000903377.1">
    <property type="nucleotide sequence ID" value="NC_011601.1"/>
</dbReference>
<dbReference type="SMR" id="B7UK53"/>
<dbReference type="GeneID" id="75206286"/>
<dbReference type="KEGG" id="ecg:E2348C_3592"/>
<dbReference type="HOGENOM" id="CLU_166087_2_1_6"/>
<dbReference type="Proteomes" id="UP000008205">
    <property type="component" value="Chromosome"/>
</dbReference>
<dbReference type="GO" id="GO:1990228">
    <property type="term" value="C:sulfurtransferase complex"/>
    <property type="evidence" value="ECO:0007669"/>
    <property type="project" value="TreeGrafter"/>
</dbReference>
<dbReference type="GO" id="GO:0002143">
    <property type="term" value="P:tRNA wobble position uridine thiolation"/>
    <property type="evidence" value="ECO:0007669"/>
    <property type="project" value="InterPro"/>
</dbReference>
<dbReference type="FunFam" id="3.40.1260.10:FF:000002">
    <property type="entry name" value="Sulfurtransferase TusB"/>
    <property type="match status" value="1"/>
</dbReference>
<dbReference type="Gene3D" id="3.40.1260.10">
    <property type="entry name" value="DsrEFH-like"/>
    <property type="match status" value="1"/>
</dbReference>
<dbReference type="HAMAP" id="MF_01564">
    <property type="entry name" value="Thiourid_synth_B"/>
    <property type="match status" value="1"/>
</dbReference>
<dbReference type="InterPro" id="IPR027396">
    <property type="entry name" value="DsrEFH-like"/>
</dbReference>
<dbReference type="InterPro" id="IPR023526">
    <property type="entry name" value="Sulphur_relay_TusB"/>
</dbReference>
<dbReference type="InterPro" id="IPR007215">
    <property type="entry name" value="Sulphur_relay_TusB/DsrH"/>
</dbReference>
<dbReference type="NCBIfam" id="NF010035">
    <property type="entry name" value="PRK13510.1"/>
    <property type="match status" value="1"/>
</dbReference>
<dbReference type="NCBIfam" id="TIGR03011">
    <property type="entry name" value="sulf_tusB_dsrH"/>
    <property type="match status" value="1"/>
</dbReference>
<dbReference type="PANTHER" id="PTHR37526">
    <property type="entry name" value="PROTEIN TUSB"/>
    <property type="match status" value="1"/>
</dbReference>
<dbReference type="PANTHER" id="PTHR37526:SF1">
    <property type="entry name" value="PROTEIN TUSB"/>
    <property type="match status" value="1"/>
</dbReference>
<dbReference type="Pfam" id="PF04077">
    <property type="entry name" value="DsrH"/>
    <property type="match status" value="1"/>
</dbReference>
<dbReference type="SUPFAM" id="SSF75169">
    <property type="entry name" value="DsrEFH-like"/>
    <property type="match status" value="1"/>
</dbReference>
<proteinExistence type="inferred from homology"/>
<evidence type="ECO:0000255" key="1">
    <source>
        <dbReference type="HAMAP-Rule" id="MF_01564"/>
    </source>
</evidence>